<keyword id="KW-0997">Cell inner membrane</keyword>
<keyword id="KW-1003">Cell membrane</keyword>
<keyword id="KW-0472">Membrane</keyword>
<keyword id="KW-0653">Protein transport</keyword>
<keyword id="KW-1185">Reference proteome</keyword>
<keyword id="KW-0811">Translocation</keyword>
<keyword id="KW-0812">Transmembrane</keyword>
<keyword id="KW-1133">Transmembrane helix</keyword>
<keyword id="KW-0813">Transport</keyword>
<dbReference type="EMBL" id="CP000471">
    <property type="protein sequence ID" value="ABK45702.1"/>
    <property type="molecule type" value="Genomic_DNA"/>
</dbReference>
<dbReference type="RefSeq" id="WP_011714765.1">
    <property type="nucleotide sequence ID" value="NC_008576.1"/>
</dbReference>
<dbReference type="SMR" id="A0LCK9"/>
<dbReference type="STRING" id="156889.Mmc1_3212"/>
<dbReference type="KEGG" id="mgm:Mmc1_3212"/>
<dbReference type="eggNOG" id="COG0342">
    <property type="taxonomic scope" value="Bacteria"/>
</dbReference>
<dbReference type="HOGENOM" id="CLU_007894_4_3_5"/>
<dbReference type="OrthoDB" id="9805019at2"/>
<dbReference type="Proteomes" id="UP000002586">
    <property type="component" value="Chromosome"/>
</dbReference>
<dbReference type="GO" id="GO:0005886">
    <property type="term" value="C:plasma membrane"/>
    <property type="evidence" value="ECO:0007669"/>
    <property type="project" value="UniProtKB-SubCell"/>
</dbReference>
<dbReference type="GO" id="GO:0015450">
    <property type="term" value="F:protein-transporting ATPase activity"/>
    <property type="evidence" value="ECO:0007669"/>
    <property type="project" value="InterPro"/>
</dbReference>
<dbReference type="GO" id="GO:0065002">
    <property type="term" value="P:intracellular protein transmembrane transport"/>
    <property type="evidence" value="ECO:0007669"/>
    <property type="project" value="UniProtKB-UniRule"/>
</dbReference>
<dbReference type="GO" id="GO:0006605">
    <property type="term" value="P:protein targeting"/>
    <property type="evidence" value="ECO:0007669"/>
    <property type="project" value="UniProtKB-UniRule"/>
</dbReference>
<dbReference type="GO" id="GO:0043952">
    <property type="term" value="P:protein transport by the Sec complex"/>
    <property type="evidence" value="ECO:0007669"/>
    <property type="project" value="UniProtKB-UniRule"/>
</dbReference>
<dbReference type="FunFam" id="3.30.1360.200:FF:000002">
    <property type="entry name" value="Preprotein translocase subunit SecD"/>
    <property type="match status" value="1"/>
</dbReference>
<dbReference type="FunFam" id="1.20.1640.10:FF:000004">
    <property type="entry name" value="Protein translocase subunit SecD"/>
    <property type="match status" value="1"/>
</dbReference>
<dbReference type="Gene3D" id="3.30.1360.200">
    <property type="match status" value="1"/>
</dbReference>
<dbReference type="Gene3D" id="3.30.70.3400">
    <property type="match status" value="2"/>
</dbReference>
<dbReference type="Gene3D" id="1.20.1640.10">
    <property type="entry name" value="Multidrug efflux transporter AcrB transmembrane domain"/>
    <property type="match status" value="1"/>
</dbReference>
<dbReference type="HAMAP" id="MF_01463_B">
    <property type="entry name" value="SecD_B"/>
    <property type="match status" value="1"/>
</dbReference>
<dbReference type="InterPro" id="IPR001036">
    <property type="entry name" value="Acrflvin-R"/>
</dbReference>
<dbReference type="InterPro" id="IPR005791">
    <property type="entry name" value="SecD"/>
</dbReference>
<dbReference type="InterPro" id="IPR022813">
    <property type="entry name" value="SecD/SecF_arch_bac"/>
</dbReference>
<dbReference type="InterPro" id="IPR048631">
    <property type="entry name" value="SecD_1st"/>
</dbReference>
<dbReference type="InterPro" id="IPR048634">
    <property type="entry name" value="SecD_SecF_C"/>
</dbReference>
<dbReference type="InterPro" id="IPR055344">
    <property type="entry name" value="SecD_SecF_C_bact"/>
</dbReference>
<dbReference type="InterPro" id="IPR054384">
    <property type="entry name" value="SecDF_P1_head"/>
</dbReference>
<dbReference type="NCBIfam" id="TIGR00916">
    <property type="entry name" value="2A0604s01"/>
    <property type="match status" value="1"/>
</dbReference>
<dbReference type="NCBIfam" id="TIGR01129">
    <property type="entry name" value="secD"/>
    <property type="match status" value="1"/>
</dbReference>
<dbReference type="PANTHER" id="PTHR30081:SF1">
    <property type="entry name" value="PROTEIN TRANSLOCASE SUBUNIT SECD"/>
    <property type="match status" value="1"/>
</dbReference>
<dbReference type="PANTHER" id="PTHR30081">
    <property type="entry name" value="PROTEIN-EXPORT MEMBRANE PROTEIN SEC"/>
    <property type="match status" value="1"/>
</dbReference>
<dbReference type="Pfam" id="PF21760">
    <property type="entry name" value="SecD_1st"/>
    <property type="match status" value="1"/>
</dbReference>
<dbReference type="Pfam" id="PF02355">
    <property type="entry name" value="SecD_SecF_C"/>
    <property type="match status" value="1"/>
</dbReference>
<dbReference type="Pfam" id="PF22599">
    <property type="entry name" value="SecDF_P1_head"/>
    <property type="match status" value="1"/>
</dbReference>
<dbReference type="PRINTS" id="PR00702">
    <property type="entry name" value="ACRIFLAVINRP"/>
</dbReference>
<dbReference type="SUPFAM" id="SSF82866">
    <property type="entry name" value="Multidrug efflux transporter AcrB transmembrane domain"/>
    <property type="match status" value="1"/>
</dbReference>
<organism>
    <name type="scientific">Magnetococcus marinus (strain ATCC BAA-1437 / JCM 17883 / MC-1)</name>
    <dbReference type="NCBI Taxonomy" id="156889"/>
    <lineage>
        <taxon>Bacteria</taxon>
        <taxon>Pseudomonadati</taxon>
        <taxon>Pseudomonadota</taxon>
        <taxon>Alphaproteobacteria</taxon>
        <taxon>Magnetococcales</taxon>
        <taxon>Magnetococcaceae</taxon>
        <taxon>Magnetococcus</taxon>
    </lineage>
</organism>
<reference key="1">
    <citation type="journal article" date="2009" name="Appl. Environ. Microbiol.">
        <title>Complete genome sequence of the chemolithoautotrophic marine magnetotactic coccus strain MC-1.</title>
        <authorList>
            <person name="Schubbe S."/>
            <person name="Williams T.J."/>
            <person name="Xie G."/>
            <person name="Kiss H.E."/>
            <person name="Brettin T.S."/>
            <person name="Martinez D."/>
            <person name="Ross C.A."/>
            <person name="Schuler D."/>
            <person name="Cox B.L."/>
            <person name="Nealson K.H."/>
            <person name="Bazylinski D.A."/>
        </authorList>
    </citation>
    <scope>NUCLEOTIDE SEQUENCE [LARGE SCALE GENOMIC DNA]</scope>
    <source>
        <strain>ATCC BAA-1437 / JCM 17883 / MC-1</strain>
    </source>
</reference>
<comment type="function">
    <text evidence="1">Part of the Sec protein translocase complex. Interacts with the SecYEG preprotein conducting channel. SecDF uses the proton motive force (PMF) to complete protein translocation after the ATP-dependent function of SecA.</text>
</comment>
<comment type="subunit">
    <text evidence="1">Forms a complex with SecF. Part of the essential Sec protein translocation apparatus which comprises SecA, SecYEG and auxiliary proteins SecDF-YajC and YidC.</text>
</comment>
<comment type="subcellular location">
    <subcellularLocation>
        <location evidence="1">Cell inner membrane</location>
        <topology evidence="1">Multi-pass membrane protein</topology>
    </subcellularLocation>
</comment>
<comment type="similarity">
    <text evidence="1">Belongs to the SecD/SecF family. SecD subfamily.</text>
</comment>
<evidence type="ECO:0000255" key="1">
    <source>
        <dbReference type="HAMAP-Rule" id="MF_01463"/>
    </source>
</evidence>
<proteinExistence type="inferred from homology"/>
<gene>
    <name evidence="1" type="primary">secD</name>
    <name type="ordered locus">Mmc1_3212</name>
</gene>
<sequence length="525" mass="57518">MRQQPRWKLYLVVLVALGSIYYALPSLLGGNLPSWMPNKVIHQGLDLQGGLYLLYDVKVEEAIKQAGNNMVDSARNLLRKERQRYRGIEQVGADQVVIRLTPNSDTERMLSVLKDELRESKVEHFQPEAQIRLTLGEAEKVEIRKFAVDQAIEIIRNRIDAFGVSEPSIQKQGERRIIVQLPGIKNPDRAKGLIGRTARLDFKLVNEKGDLNRALEGQVPADSELMYEERSANQGGKSAYPLLVFKRTILSGQHIQNAQTTFNEYNEPIVSVKFDAVGGRKFSQITGEHIKERLAIVLDGKVQSAPVIQDKIAGGRATISGSFTREEAHDLAIVLRAGALPAPLVILEERTVGPTLGADSVAQGLNSVLIGGVLVVLFMVLYYKGFGMLANLAVVLNVTILVSLLALMQATLTLPGIAGAVLLLGMAVDANVLIFERIREELRLGKSPLAAIDHGYSKAFSTILDANITTLITAVILYQFGTGPVRGFAVTLSVGLLASMFTAIFVTRVVLAEVVKNRRLKTLSI</sequence>
<feature type="chain" id="PRO_0000412680" description="Protein translocase subunit SecD">
    <location>
        <begin position="1"/>
        <end position="525"/>
    </location>
</feature>
<feature type="transmembrane region" description="Helical" evidence="1">
    <location>
        <begin position="9"/>
        <end position="29"/>
    </location>
</feature>
<feature type="transmembrane region" description="Helical" evidence="1">
    <location>
        <begin position="368"/>
        <end position="388"/>
    </location>
</feature>
<feature type="transmembrane region" description="Helical" evidence="1">
    <location>
        <begin position="392"/>
        <end position="412"/>
    </location>
</feature>
<feature type="transmembrane region" description="Helical" evidence="1">
    <location>
        <begin position="415"/>
        <end position="435"/>
    </location>
</feature>
<feature type="transmembrane region" description="Helical" evidence="1">
    <location>
        <begin position="460"/>
        <end position="480"/>
    </location>
</feature>
<feature type="transmembrane region" description="Helical" evidence="1">
    <location>
        <begin position="487"/>
        <end position="507"/>
    </location>
</feature>
<accession>A0LCK9</accession>
<name>SECD_MAGMM</name>
<protein>
    <recommendedName>
        <fullName evidence="1">Protein translocase subunit SecD</fullName>
    </recommendedName>
</protein>